<dbReference type="EMBL" id="CP000082">
    <property type="protein sequence ID" value="AAZ18415.1"/>
    <property type="molecule type" value="Genomic_DNA"/>
</dbReference>
<dbReference type="RefSeq" id="WP_011279844.1">
    <property type="nucleotide sequence ID" value="NC_007204.1"/>
</dbReference>
<dbReference type="SMR" id="Q4FU93"/>
<dbReference type="STRING" id="259536.Psyc_0554"/>
<dbReference type="KEGG" id="par:Psyc_0554"/>
<dbReference type="eggNOG" id="COG3022">
    <property type="taxonomic scope" value="Bacteria"/>
</dbReference>
<dbReference type="HOGENOM" id="CLU_061989_0_0_6"/>
<dbReference type="OrthoDB" id="9777133at2"/>
<dbReference type="Proteomes" id="UP000000546">
    <property type="component" value="Chromosome"/>
</dbReference>
<dbReference type="GO" id="GO:0005829">
    <property type="term" value="C:cytosol"/>
    <property type="evidence" value="ECO:0007669"/>
    <property type="project" value="TreeGrafter"/>
</dbReference>
<dbReference type="GO" id="GO:0033194">
    <property type="term" value="P:response to hydroperoxide"/>
    <property type="evidence" value="ECO:0007669"/>
    <property type="project" value="TreeGrafter"/>
</dbReference>
<dbReference type="HAMAP" id="MF_00652">
    <property type="entry name" value="UPF0246"/>
    <property type="match status" value="1"/>
</dbReference>
<dbReference type="InterPro" id="IPR005583">
    <property type="entry name" value="YaaA"/>
</dbReference>
<dbReference type="NCBIfam" id="NF002542">
    <property type="entry name" value="PRK02101.1-3"/>
    <property type="match status" value="1"/>
</dbReference>
<dbReference type="PANTHER" id="PTHR30283:SF4">
    <property type="entry name" value="PEROXIDE STRESS RESISTANCE PROTEIN YAAA"/>
    <property type="match status" value="1"/>
</dbReference>
<dbReference type="PANTHER" id="PTHR30283">
    <property type="entry name" value="PEROXIDE STRESS RESPONSE PROTEIN YAAA"/>
    <property type="match status" value="1"/>
</dbReference>
<dbReference type="Pfam" id="PF03883">
    <property type="entry name" value="H2O2_YaaD"/>
    <property type="match status" value="1"/>
</dbReference>
<comment type="similarity">
    <text evidence="1">Belongs to the UPF0246 family.</text>
</comment>
<reference key="1">
    <citation type="journal article" date="2010" name="Appl. Environ. Microbiol.">
        <title>The genome sequence of Psychrobacter arcticus 273-4, a psychroactive Siberian permafrost bacterium, reveals mechanisms for adaptation to low-temperature growth.</title>
        <authorList>
            <person name="Ayala-del-Rio H.L."/>
            <person name="Chain P.S."/>
            <person name="Grzymski J.J."/>
            <person name="Ponder M.A."/>
            <person name="Ivanova N."/>
            <person name="Bergholz P.W."/>
            <person name="Di Bartolo G."/>
            <person name="Hauser L."/>
            <person name="Land M."/>
            <person name="Bakermans C."/>
            <person name="Rodrigues D."/>
            <person name="Klappenbach J."/>
            <person name="Zarka D."/>
            <person name="Larimer F."/>
            <person name="Richardson P."/>
            <person name="Murray A."/>
            <person name="Thomashow M."/>
            <person name="Tiedje J.M."/>
        </authorList>
    </citation>
    <scope>NUCLEOTIDE SEQUENCE [LARGE SCALE GENOMIC DNA]</scope>
    <source>
        <strain>DSM 17307 / VKM B-2377 / 273-4</strain>
    </source>
</reference>
<proteinExistence type="inferred from homology"/>
<protein>
    <recommendedName>
        <fullName evidence="1">UPF0246 protein Psyc_0554</fullName>
    </recommendedName>
</protein>
<feature type="chain" id="PRO_0000262044" description="UPF0246 protein Psyc_0554">
    <location>
        <begin position="1"/>
        <end position="270"/>
    </location>
</feature>
<accession>Q4FU93</accession>
<keyword id="KW-1185">Reference proteome</keyword>
<gene>
    <name type="ordered locus">Psyc_0554</name>
</gene>
<evidence type="ECO:0000255" key="1">
    <source>
        <dbReference type="HAMAP-Rule" id="MF_00652"/>
    </source>
</evidence>
<sequence length="270" mass="30772">MYFLLSPAKSLNETDAVPVHISNYYSQPELIEHSQALMKILKSKEPIDLQELMSISDDLSQLNAKRNQEWNWSVEQPFTDSASGNLAKPAGYLFDGDVYTGLDMYAMDKESAIYVNEHLGILSGLYGVLKPLDLIQPYRLEMGTKLKNECGDNLYEFWGEEVTNTINARMVDSDDTVLINLASNEYFKSVKKKALAAEIVTPRFEDEKNGQYKVISFYAKKARGLMVKYAADNKLTNAEQLKQFNLAGYYYVDELSDDKTWVFRRDAADQ</sequence>
<name>Y554_PSYA2</name>
<organism>
    <name type="scientific">Psychrobacter arcticus (strain DSM 17307 / VKM B-2377 / 273-4)</name>
    <dbReference type="NCBI Taxonomy" id="259536"/>
    <lineage>
        <taxon>Bacteria</taxon>
        <taxon>Pseudomonadati</taxon>
        <taxon>Pseudomonadota</taxon>
        <taxon>Gammaproteobacteria</taxon>
        <taxon>Moraxellales</taxon>
        <taxon>Moraxellaceae</taxon>
        <taxon>Psychrobacter</taxon>
    </lineage>
</organism>